<sequence>MSMFCYQCQETAGCKGCTVKGVCGKDESVAKAQDLLIYVTKGLAVVSNEGMKVGVKDSKVNKYIVENLFTTITNANFDRDSILDRVRETLRIREDLKAKVVKAGGKVGEVKVSGGFFKKLFGIAKEEMVGPDAATWTADNVIEFDAKAEKVGVLSTENEDIRSLRELITYGLKGLSAYMKHAMNLKYDDETVHEFMAKALAATLDDSLSVDQLVALALEAGKFGVNGMALLDKANTETYGNPEITTVDIGVRKNPGILISGHDLRDLEMLLEQTEGTGVDVYTHGEMLAGQYYPKFKKYKNFAGNYGNAWWKQKEEFEKFNGPIVMTTNCIVIPKASYKNRLFTTGATGMPGCPHIEAKADGTKDFSEVIKMAKKCSAPTEIEKGQIVGGFAHNQVIALADKVVAAVKSGAIKRFFVMAGCDGRANSRNYYTEFAEKLPKDTVILTAGCAKYKYNKLNLGDIGGIPRVLDAGQCNDSYSLVVIALKLQEVFRLKSVNELPISYNIAWYEQKAVIVLLSLLHLGVKNIHLGPTLPAFLSPNVAKVLVDNFGIGGITNVEDDMKMFMQG</sequence>
<gene>
    <name evidence="1" type="primary">hcp2</name>
    <name type="ordered locus">CA_C3428</name>
</gene>
<feature type="chain" id="PRO_0000151671" description="Hydroxylamine reductase 2">
    <location>
        <begin position="1"/>
        <end position="567"/>
    </location>
</feature>
<feature type="binding site" evidence="1">
    <location>
        <position position="5"/>
    </location>
    <ligand>
        <name>[4Fe-4S] cluster</name>
        <dbReference type="ChEBI" id="CHEBI:49883"/>
    </ligand>
</feature>
<feature type="binding site" evidence="1">
    <location>
        <position position="8"/>
    </location>
    <ligand>
        <name>[4Fe-4S] cluster</name>
        <dbReference type="ChEBI" id="CHEBI:49883"/>
    </ligand>
</feature>
<feature type="binding site" evidence="1">
    <location>
        <position position="17"/>
    </location>
    <ligand>
        <name>[4Fe-4S] cluster</name>
        <dbReference type="ChEBI" id="CHEBI:49883"/>
    </ligand>
</feature>
<feature type="binding site" evidence="1">
    <location>
        <position position="23"/>
    </location>
    <ligand>
        <name>[4Fe-4S] cluster</name>
        <dbReference type="ChEBI" id="CHEBI:49883"/>
    </ligand>
</feature>
<feature type="binding site" evidence="1">
    <location>
        <position position="262"/>
    </location>
    <ligand>
        <name>hybrid [4Fe-2O-2S] cluster</name>
        <dbReference type="ChEBI" id="CHEBI:60519"/>
    </ligand>
</feature>
<feature type="binding site" evidence="1">
    <location>
        <position position="286"/>
    </location>
    <ligand>
        <name>hybrid [4Fe-2O-2S] cluster</name>
        <dbReference type="ChEBI" id="CHEBI:60519"/>
    </ligand>
</feature>
<feature type="binding site" evidence="1">
    <location>
        <position position="330"/>
    </location>
    <ligand>
        <name>hybrid [4Fe-2O-2S] cluster</name>
        <dbReference type="ChEBI" id="CHEBI:60519"/>
    </ligand>
</feature>
<feature type="binding site" description="via persulfide group" evidence="1">
    <location>
        <position position="421"/>
    </location>
    <ligand>
        <name>hybrid [4Fe-2O-2S] cluster</name>
        <dbReference type="ChEBI" id="CHEBI:60519"/>
    </ligand>
</feature>
<feature type="binding site" evidence="1">
    <location>
        <position position="449"/>
    </location>
    <ligand>
        <name>hybrid [4Fe-2O-2S] cluster</name>
        <dbReference type="ChEBI" id="CHEBI:60519"/>
    </ligand>
</feature>
<feature type="binding site" evidence="1">
    <location>
        <position position="474"/>
    </location>
    <ligand>
        <name>hybrid [4Fe-2O-2S] cluster</name>
        <dbReference type="ChEBI" id="CHEBI:60519"/>
    </ligand>
</feature>
<feature type="binding site" evidence="1">
    <location>
        <position position="509"/>
    </location>
    <ligand>
        <name>hybrid [4Fe-2O-2S] cluster</name>
        <dbReference type="ChEBI" id="CHEBI:60519"/>
    </ligand>
</feature>
<feature type="binding site" evidence="1">
    <location>
        <position position="511"/>
    </location>
    <ligand>
        <name>hybrid [4Fe-2O-2S] cluster</name>
        <dbReference type="ChEBI" id="CHEBI:60519"/>
    </ligand>
</feature>
<feature type="modified residue" description="Cysteine persulfide" evidence="1">
    <location>
        <position position="421"/>
    </location>
</feature>
<proteinExistence type="inferred from homology"/>
<evidence type="ECO:0000255" key="1">
    <source>
        <dbReference type="HAMAP-Rule" id="MF_00069"/>
    </source>
</evidence>
<organism>
    <name type="scientific">Clostridium acetobutylicum (strain ATCC 824 / DSM 792 / JCM 1419 / IAM 19013 / LMG 5710 / NBRC 13948 / NRRL B-527 / VKM B-1787 / 2291 / W)</name>
    <dbReference type="NCBI Taxonomy" id="272562"/>
    <lineage>
        <taxon>Bacteria</taxon>
        <taxon>Bacillati</taxon>
        <taxon>Bacillota</taxon>
        <taxon>Clostridia</taxon>
        <taxon>Eubacteriales</taxon>
        <taxon>Clostridiaceae</taxon>
        <taxon>Clostridium</taxon>
    </lineage>
</organism>
<keyword id="KW-0004">4Fe-4S</keyword>
<keyword id="KW-0963">Cytoplasm</keyword>
<keyword id="KW-0408">Iron</keyword>
<keyword id="KW-0411">Iron-sulfur</keyword>
<keyword id="KW-0479">Metal-binding</keyword>
<keyword id="KW-0560">Oxidoreductase</keyword>
<keyword id="KW-1185">Reference proteome</keyword>
<reference key="1">
    <citation type="journal article" date="2001" name="J. Bacteriol.">
        <title>Genome sequence and comparative analysis of the solvent-producing bacterium Clostridium acetobutylicum.</title>
        <authorList>
            <person name="Noelling J."/>
            <person name="Breton G."/>
            <person name="Omelchenko M.V."/>
            <person name="Makarova K.S."/>
            <person name="Zeng Q."/>
            <person name="Gibson R."/>
            <person name="Lee H.M."/>
            <person name="Dubois J."/>
            <person name="Qiu D."/>
            <person name="Hitti J."/>
            <person name="Wolf Y.I."/>
            <person name="Tatusov R.L."/>
            <person name="Sabathe F."/>
            <person name="Doucette-Stamm L.A."/>
            <person name="Soucaille P."/>
            <person name="Daly M.J."/>
            <person name="Bennett G.N."/>
            <person name="Koonin E.V."/>
            <person name="Smith D.R."/>
        </authorList>
    </citation>
    <scope>NUCLEOTIDE SEQUENCE [LARGE SCALE GENOMIC DNA]</scope>
    <source>
        <strain>ATCC 824 / DSM 792 / JCM 1419 / IAM 19013 / LMG 5710 / NBRC 13948 / NRRL B-527 / VKM B-1787 / 2291 / W</strain>
    </source>
</reference>
<name>HCP2_CLOAB</name>
<dbReference type="EC" id="1.7.99.1" evidence="1"/>
<dbReference type="EMBL" id="AE001437">
    <property type="protein sequence ID" value="AAK81358.1"/>
    <property type="molecule type" value="Genomic_DNA"/>
</dbReference>
<dbReference type="PIR" id="C97321">
    <property type="entry name" value="C97321"/>
</dbReference>
<dbReference type="RefSeq" id="NP_350018.3">
    <property type="nucleotide sequence ID" value="NC_003030.1"/>
</dbReference>
<dbReference type="SMR" id="Q97DP4"/>
<dbReference type="STRING" id="272562.CA_C3428"/>
<dbReference type="KEGG" id="cac:CA_C3428"/>
<dbReference type="PATRIC" id="fig|272562.8.peg.3610"/>
<dbReference type="eggNOG" id="COG1151">
    <property type="taxonomic scope" value="Bacteria"/>
</dbReference>
<dbReference type="HOGENOM" id="CLU_038344_2_0_9"/>
<dbReference type="OrthoDB" id="9761526at2"/>
<dbReference type="Proteomes" id="UP000000814">
    <property type="component" value="Chromosome"/>
</dbReference>
<dbReference type="GO" id="GO:0005737">
    <property type="term" value="C:cytoplasm"/>
    <property type="evidence" value="ECO:0007669"/>
    <property type="project" value="UniProtKB-SubCell"/>
</dbReference>
<dbReference type="GO" id="GO:0051539">
    <property type="term" value="F:4 iron, 4 sulfur cluster binding"/>
    <property type="evidence" value="ECO:0007669"/>
    <property type="project" value="UniProtKB-KW"/>
</dbReference>
<dbReference type="GO" id="GO:0050418">
    <property type="term" value="F:hydroxylamine reductase activity"/>
    <property type="evidence" value="ECO:0007669"/>
    <property type="project" value="UniProtKB-UniRule"/>
</dbReference>
<dbReference type="GO" id="GO:0046872">
    <property type="term" value="F:metal ion binding"/>
    <property type="evidence" value="ECO:0007669"/>
    <property type="project" value="UniProtKB-KW"/>
</dbReference>
<dbReference type="GO" id="GO:0004601">
    <property type="term" value="F:peroxidase activity"/>
    <property type="evidence" value="ECO:0007669"/>
    <property type="project" value="TreeGrafter"/>
</dbReference>
<dbReference type="GO" id="GO:0042542">
    <property type="term" value="P:response to hydrogen peroxide"/>
    <property type="evidence" value="ECO:0007669"/>
    <property type="project" value="TreeGrafter"/>
</dbReference>
<dbReference type="CDD" id="cd01914">
    <property type="entry name" value="HCP"/>
    <property type="match status" value="1"/>
</dbReference>
<dbReference type="FunFam" id="1.20.1270.20:FF:000001">
    <property type="entry name" value="Hydroxylamine reductase"/>
    <property type="match status" value="1"/>
</dbReference>
<dbReference type="FunFam" id="3.40.50.2030:FF:000001">
    <property type="entry name" value="Hydroxylamine reductase"/>
    <property type="match status" value="1"/>
</dbReference>
<dbReference type="FunFam" id="3.40.50.2030:FF:000002">
    <property type="entry name" value="Hydroxylamine reductase"/>
    <property type="match status" value="1"/>
</dbReference>
<dbReference type="Gene3D" id="1.20.1270.20">
    <property type="match status" value="2"/>
</dbReference>
<dbReference type="Gene3D" id="3.40.50.2030">
    <property type="match status" value="2"/>
</dbReference>
<dbReference type="HAMAP" id="MF_00069">
    <property type="entry name" value="Hydroxylam_reduct"/>
    <property type="match status" value="1"/>
</dbReference>
<dbReference type="InterPro" id="IPR004137">
    <property type="entry name" value="HCP/CODH"/>
</dbReference>
<dbReference type="InterPro" id="IPR010048">
    <property type="entry name" value="Hydroxylam_reduct"/>
</dbReference>
<dbReference type="InterPro" id="IPR016099">
    <property type="entry name" value="Prismane-like_a/b-sand"/>
</dbReference>
<dbReference type="InterPro" id="IPR011254">
    <property type="entry name" value="Prismane-like_sf"/>
</dbReference>
<dbReference type="InterPro" id="IPR016100">
    <property type="entry name" value="Prismane_a-bundle"/>
</dbReference>
<dbReference type="NCBIfam" id="TIGR01703">
    <property type="entry name" value="hybrid_clust"/>
    <property type="match status" value="1"/>
</dbReference>
<dbReference type="NCBIfam" id="NF003658">
    <property type="entry name" value="PRK05290.1"/>
    <property type="match status" value="1"/>
</dbReference>
<dbReference type="PANTHER" id="PTHR30109">
    <property type="entry name" value="HYDROXYLAMINE REDUCTASE"/>
    <property type="match status" value="1"/>
</dbReference>
<dbReference type="PANTHER" id="PTHR30109:SF0">
    <property type="entry name" value="HYDROXYLAMINE REDUCTASE"/>
    <property type="match status" value="1"/>
</dbReference>
<dbReference type="Pfam" id="PF03063">
    <property type="entry name" value="Prismane"/>
    <property type="match status" value="1"/>
</dbReference>
<dbReference type="PIRSF" id="PIRSF000076">
    <property type="entry name" value="HCP"/>
    <property type="match status" value="1"/>
</dbReference>
<dbReference type="SUPFAM" id="SSF56821">
    <property type="entry name" value="Prismane protein-like"/>
    <property type="match status" value="1"/>
</dbReference>
<protein>
    <recommendedName>
        <fullName evidence="1">Hydroxylamine reductase 2</fullName>
        <ecNumber evidence="1">1.7.99.1</ecNumber>
    </recommendedName>
    <alternativeName>
        <fullName evidence="1">Hybrid-cluster protein 2</fullName>
        <shortName evidence="1">HCP 2</shortName>
    </alternativeName>
    <alternativeName>
        <fullName evidence="1">Prismane protein 2</fullName>
    </alternativeName>
</protein>
<accession>Q97DP4</accession>
<comment type="function">
    <text evidence="1">Catalyzes the reduction of hydroxylamine to form NH(3) and H(2)O.</text>
</comment>
<comment type="catalytic activity">
    <reaction evidence="1">
        <text>A + NH4(+) + H2O = hydroxylamine + AH2 + H(+)</text>
        <dbReference type="Rhea" id="RHEA:22052"/>
        <dbReference type="ChEBI" id="CHEBI:13193"/>
        <dbReference type="ChEBI" id="CHEBI:15377"/>
        <dbReference type="ChEBI" id="CHEBI:15378"/>
        <dbReference type="ChEBI" id="CHEBI:15429"/>
        <dbReference type="ChEBI" id="CHEBI:17499"/>
        <dbReference type="ChEBI" id="CHEBI:28938"/>
        <dbReference type="EC" id="1.7.99.1"/>
    </reaction>
</comment>
<comment type="cofactor">
    <cofactor evidence="1">
        <name>[4Fe-4S] cluster</name>
        <dbReference type="ChEBI" id="CHEBI:49883"/>
    </cofactor>
    <text evidence="1">Binds 1 [4Fe-4S] cluster.</text>
</comment>
<comment type="cofactor">
    <cofactor evidence="1">
        <name>hybrid [4Fe-2O-2S] cluster</name>
        <dbReference type="ChEBI" id="CHEBI:60519"/>
    </cofactor>
    <text evidence="1">Binds 1 hybrid [4Fe-2O-2S] cluster.</text>
</comment>
<comment type="subcellular location">
    <subcellularLocation>
        <location evidence="1">Cytoplasm</location>
    </subcellularLocation>
</comment>
<comment type="similarity">
    <text evidence="1">Belongs to the HCP family.</text>
</comment>